<dbReference type="EC" id="1.3.5.1" evidence="1"/>
<dbReference type="EMBL" id="AE000516">
    <property type="protein sequence ID" value="AAK45871.1"/>
    <property type="molecule type" value="Genomic_DNA"/>
</dbReference>
<dbReference type="PIR" id="F70762">
    <property type="entry name" value="F70762"/>
</dbReference>
<dbReference type="SMR" id="P9WN88"/>
<dbReference type="KEGG" id="mtc:MT1604"/>
<dbReference type="PATRIC" id="fig|83331.31.peg.1726"/>
<dbReference type="HOGENOM" id="CLU_044838_3_2_11"/>
<dbReference type="Proteomes" id="UP000001020">
    <property type="component" value="Chromosome"/>
</dbReference>
<dbReference type="GO" id="GO:0005886">
    <property type="term" value="C:plasma membrane"/>
    <property type="evidence" value="ECO:0007669"/>
    <property type="project" value="UniProtKB-SubCell"/>
</dbReference>
<dbReference type="GO" id="GO:0051537">
    <property type="term" value="F:2 iron, 2 sulfur cluster binding"/>
    <property type="evidence" value="ECO:0007669"/>
    <property type="project" value="UniProtKB-KW"/>
</dbReference>
<dbReference type="GO" id="GO:0051538">
    <property type="term" value="F:3 iron, 4 sulfur cluster binding"/>
    <property type="evidence" value="ECO:0007669"/>
    <property type="project" value="UniProtKB-KW"/>
</dbReference>
<dbReference type="GO" id="GO:0051539">
    <property type="term" value="F:4 iron, 4 sulfur cluster binding"/>
    <property type="evidence" value="ECO:0007669"/>
    <property type="project" value="UniProtKB-KW"/>
</dbReference>
<dbReference type="GO" id="GO:0009055">
    <property type="term" value="F:electron transfer activity"/>
    <property type="evidence" value="ECO:0007669"/>
    <property type="project" value="InterPro"/>
</dbReference>
<dbReference type="GO" id="GO:0046872">
    <property type="term" value="F:metal ion binding"/>
    <property type="evidence" value="ECO:0007669"/>
    <property type="project" value="UniProtKB-KW"/>
</dbReference>
<dbReference type="GO" id="GO:0008177">
    <property type="term" value="F:succinate dehydrogenase (quinone) activity"/>
    <property type="evidence" value="ECO:0007669"/>
    <property type="project" value="RHEA"/>
</dbReference>
<dbReference type="GO" id="GO:0022904">
    <property type="term" value="P:respiratory electron transport chain"/>
    <property type="evidence" value="ECO:0007669"/>
    <property type="project" value="TreeGrafter"/>
</dbReference>
<dbReference type="GO" id="GO:0006099">
    <property type="term" value="P:tricarboxylic acid cycle"/>
    <property type="evidence" value="ECO:0007669"/>
    <property type="project" value="UniProtKB-KW"/>
</dbReference>
<dbReference type="FunFam" id="1.10.1060.10:FF:000003">
    <property type="entry name" value="Succinate dehydrogenase iron-sulfur subunit"/>
    <property type="match status" value="1"/>
</dbReference>
<dbReference type="FunFam" id="3.10.20.30:FF:000009">
    <property type="entry name" value="Succinate dehydrogenase iron-sulfur subunit"/>
    <property type="match status" value="1"/>
</dbReference>
<dbReference type="Gene3D" id="3.10.20.30">
    <property type="match status" value="1"/>
</dbReference>
<dbReference type="Gene3D" id="1.10.1060.10">
    <property type="entry name" value="Alpha-helical ferredoxin"/>
    <property type="match status" value="1"/>
</dbReference>
<dbReference type="InterPro" id="IPR036010">
    <property type="entry name" value="2Fe-2S_ferredoxin-like_sf"/>
</dbReference>
<dbReference type="InterPro" id="IPR017896">
    <property type="entry name" value="4Fe4S_Fe-S-bd"/>
</dbReference>
<dbReference type="InterPro" id="IPR017900">
    <property type="entry name" value="4Fe4S_Fe_S_CS"/>
</dbReference>
<dbReference type="InterPro" id="IPR012675">
    <property type="entry name" value="Beta-grasp_dom_sf"/>
</dbReference>
<dbReference type="InterPro" id="IPR009051">
    <property type="entry name" value="Helical_ferredxn"/>
</dbReference>
<dbReference type="InterPro" id="IPR050573">
    <property type="entry name" value="SDH/FRD_Iron-Sulfur"/>
</dbReference>
<dbReference type="InterPro" id="IPR004489">
    <property type="entry name" value="Succ_DH/fum_Rdtase_Fe-S"/>
</dbReference>
<dbReference type="InterPro" id="IPR025192">
    <property type="entry name" value="Succ_DH/fum_Rdtase_N"/>
</dbReference>
<dbReference type="NCBIfam" id="TIGR00384">
    <property type="entry name" value="dhsB"/>
    <property type="match status" value="1"/>
</dbReference>
<dbReference type="NCBIfam" id="NF004616">
    <property type="entry name" value="PRK05950.1"/>
    <property type="match status" value="1"/>
</dbReference>
<dbReference type="PANTHER" id="PTHR11921:SF29">
    <property type="entry name" value="SUCCINATE DEHYDROGENASE [UBIQUINONE] IRON-SULFUR SUBUNIT, MITOCHONDRIAL"/>
    <property type="match status" value="1"/>
</dbReference>
<dbReference type="PANTHER" id="PTHR11921">
    <property type="entry name" value="SUCCINATE DEHYDROGENASE IRON-SULFUR PROTEIN"/>
    <property type="match status" value="1"/>
</dbReference>
<dbReference type="Pfam" id="PF13085">
    <property type="entry name" value="Fer2_3"/>
    <property type="match status" value="1"/>
</dbReference>
<dbReference type="Pfam" id="PF13183">
    <property type="entry name" value="Fer4_8"/>
    <property type="match status" value="1"/>
</dbReference>
<dbReference type="SUPFAM" id="SSF54292">
    <property type="entry name" value="2Fe-2S ferredoxin-like"/>
    <property type="match status" value="1"/>
</dbReference>
<dbReference type="SUPFAM" id="SSF46548">
    <property type="entry name" value="alpha-helical ferredoxin"/>
    <property type="match status" value="1"/>
</dbReference>
<dbReference type="PROSITE" id="PS00198">
    <property type="entry name" value="4FE4S_FER_1"/>
    <property type="match status" value="1"/>
</dbReference>
<dbReference type="PROSITE" id="PS51379">
    <property type="entry name" value="4FE4S_FER_2"/>
    <property type="match status" value="1"/>
</dbReference>
<reference key="1">
    <citation type="journal article" date="2002" name="J. Bacteriol.">
        <title>Whole-genome comparison of Mycobacterium tuberculosis clinical and laboratory strains.</title>
        <authorList>
            <person name="Fleischmann R.D."/>
            <person name="Alland D."/>
            <person name="Eisen J.A."/>
            <person name="Carpenter L."/>
            <person name="White O."/>
            <person name="Peterson J.D."/>
            <person name="DeBoy R.T."/>
            <person name="Dodson R.J."/>
            <person name="Gwinn M.L."/>
            <person name="Haft D.H."/>
            <person name="Hickey E.K."/>
            <person name="Kolonay J.F."/>
            <person name="Nelson W.C."/>
            <person name="Umayam L.A."/>
            <person name="Ermolaeva M.D."/>
            <person name="Salzberg S.L."/>
            <person name="Delcher A."/>
            <person name="Utterback T.R."/>
            <person name="Weidman J.F."/>
            <person name="Khouri H.M."/>
            <person name="Gill J."/>
            <person name="Mikula A."/>
            <person name="Bishai W."/>
            <person name="Jacobs W.R. Jr."/>
            <person name="Venter J.C."/>
            <person name="Fraser C.M."/>
        </authorList>
    </citation>
    <scope>NUCLEOTIDE SEQUENCE [LARGE SCALE GENOMIC DNA]</scope>
    <source>
        <strain>CDC 1551 / Oshkosh</strain>
    </source>
</reference>
<gene>
    <name type="primary">frdB</name>
    <name type="ordered locus">MT1604</name>
</gene>
<organism>
    <name type="scientific">Mycobacterium tuberculosis (strain CDC 1551 / Oshkosh)</name>
    <dbReference type="NCBI Taxonomy" id="83331"/>
    <lineage>
        <taxon>Bacteria</taxon>
        <taxon>Bacillati</taxon>
        <taxon>Actinomycetota</taxon>
        <taxon>Actinomycetes</taxon>
        <taxon>Mycobacteriales</taxon>
        <taxon>Mycobacteriaceae</taxon>
        <taxon>Mycobacterium</taxon>
        <taxon>Mycobacterium tuberculosis complex</taxon>
    </lineage>
</organism>
<comment type="catalytic activity">
    <reaction evidence="1">
        <text>a quinone + succinate = fumarate + a quinol</text>
        <dbReference type="Rhea" id="RHEA:40523"/>
        <dbReference type="ChEBI" id="CHEBI:24646"/>
        <dbReference type="ChEBI" id="CHEBI:29806"/>
        <dbReference type="ChEBI" id="CHEBI:30031"/>
        <dbReference type="ChEBI" id="CHEBI:132124"/>
        <dbReference type="EC" id="1.3.5.1"/>
    </reaction>
</comment>
<comment type="catalytic activity">
    <reaction evidence="1">
        <text>a menaquinone + succinate = a menaquinol + fumarate</text>
        <dbReference type="Rhea" id="RHEA:27834"/>
        <dbReference type="Rhea" id="RHEA-COMP:9537"/>
        <dbReference type="Rhea" id="RHEA-COMP:9539"/>
        <dbReference type="ChEBI" id="CHEBI:16374"/>
        <dbReference type="ChEBI" id="CHEBI:18151"/>
        <dbReference type="ChEBI" id="CHEBI:29806"/>
        <dbReference type="ChEBI" id="CHEBI:30031"/>
        <dbReference type="EC" id="1.3.5.1"/>
    </reaction>
</comment>
<comment type="cofactor">
    <cofactor evidence="1">
        <name>[2Fe-2S] cluster</name>
        <dbReference type="ChEBI" id="CHEBI:190135"/>
    </cofactor>
    <text evidence="1">Binds 1 [2Fe-2S] cluster.</text>
</comment>
<comment type="cofactor">
    <cofactor evidence="1">
        <name>[3Fe-4S] cluster</name>
        <dbReference type="ChEBI" id="CHEBI:21137"/>
    </cofactor>
    <text evidence="1">Binds 1 [3Fe-4S] cluster.</text>
</comment>
<comment type="cofactor">
    <cofactor evidence="1">
        <name>[4Fe-4S] cluster</name>
        <dbReference type="ChEBI" id="CHEBI:49883"/>
    </cofactor>
    <text evidence="1">Binds 1 [4Fe-4S] cluster.</text>
</comment>
<comment type="subunit">
    <text evidence="1">Fumarate dehydrogenase forms part of an enzyme complex containing four subunits: a flavoprotein, an iron-sulfur, and two hydrophobic anchor proteins.</text>
</comment>
<comment type="subcellular location">
    <subcellularLocation>
        <location evidence="1">Cell membrane</location>
        <topology evidence="1">Peripheral membrane protein</topology>
        <orientation evidence="1">Cytoplasmic side</orientation>
    </subcellularLocation>
</comment>
<comment type="similarity">
    <text evidence="3">Belongs to the succinate dehydrogenase/fumarate reductase iron-sulfur protein family.</text>
</comment>
<protein>
    <recommendedName>
        <fullName>Fumarate reductase iron-sulfur subunit</fullName>
        <ecNumber evidence="1">1.3.5.1</ecNumber>
    </recommendedName>
    <alternativeName>
        <fullName>Quinol-fumarate reductase iron-sulfur subunit</fullName>
        <shortName>QFR iron-sulfur subunit</shortName>
    </alternativeName>
</protein>
<name>FRDB_MYCTO</name>
<accession>P9WN88</accession>
<accession>L0T766</accession>
<accession>Q10761</accession>
<evidence type="ECO:0000250" key="1">
    <source>
        <dbReference type="UniProtKB" id="P0AC47"/>
    </source>
</evidence>
<evidence type="ECO:0000255" key="2">
    <source>
        <dbReference type="PROSITE-ProRule" id="PRU00711"/>
    </source>
</evidence>
<evidence type="ECO:0000305" key="3"/>
<sequence length="247" mass="27234">MMDRIVMEVSRYRPEIESAPTFQAYEVPLTREWAVLDGLTYIKDHLDGTLSFRWSCRMGICGSSGMTINGDPKLACATFLADYLPGPVRVEPMRNFPVIRDLVVDISDFMAKLPSVKPWLVRHDEPPVEDGEYRQTPAELDAFKQFSMCINCMLCYSACPVYALDPDFLGPAAIALGQRYNLDSRDQGAADRRDVLAAADGAWACTLVGECSTACPKGVDPAGAIQRYKLTAATHALKKLLFPWGGG</sequence>
<feature type="chain" id="PRO_0000427169" description="Fumarate reductase iron-sulfur subunit">
    <location>
        <begin position="1"/>
        <end position="247"/>
    </location>
</feature>
<feature type="domain" description="2Fe-2S ferredoxin-type">
    <location>
        <begin position="14"/>
        <end position="94"/>
    </location>
</feature>
<feature type="domain" description="4Fe-4S ferredoxin-type" evidence="2">
    <location>
        <begin position="140"/>
        <end position="169"/>
    </location>
</feature>
<feature type="binding site" evidence="1">
    <location>
        <position position="12"/>
    </location>
    <ligand>
        <name>a menaquinone</name>
        <dbReference type="ChEBI" id="CHEBI:16374"/>
    </ligand>
</feature>
<feature type="binding site" evidence="1">
    <location>
        <position position="56"/>
    </location>
    <ligand>
        <name>[2Fe-2S] cluster</name>
        <dbReference type="ChEBI" id="CHEBI:190135"/>
    </ligand>
</feature>
<feature type="binding site" evidence="1">
    <location>
        <position position="61"/>
    </location>
    <ligand>
        <name>[2Fe-2S] cluster</name>
        <dbReference type="ChEBI" id="CHEBI:190135"/>
    </ligand>
</feature>
<feature type="binding site" evidence="1">
    <location>
        <position position="76"/>
    </location>
    <ligand>
        <name>[2Fe-2S] cluster</name>
        <dbReference type="ChEBI" id="CHEBI:190135"/>
    </ligand>
</feature>
<feature type="binding site" evidence="1">
    <location>
        <position position="149"/>
    </location>
    <ligand>
        <name>[4Fe-4S] cluster</name>
        <dbReference type="ChEBI" id="CHEBI:49883"/>
    </ligand>
</feature>
<feature type="binding site" evidence="1">
    <location>
        <position position="152"/>
    </location>
    <ligand>
        <name>[4Fe-4S] cluster</name>
        <dbReference type="ChEBI" id="CHEBI:49883"/>
    </ligand>
</feature>
<feature type="binding site" evidence="1">
    <location>
        <position position="155"/>
    </location>
    <ligand>
        <name>[4Fe-4S] cluster</name>
        <dbReference type="ChEBI" id="CHEBI:49883"/>
    </ligand>
</feature>
<feature type="binding site" evidence="1">
    <location>
        <position position="159"/>
    </location>
    <ligand>
        <name>[3Fe-4S] cluster</name>
        <dbReference type="ChEBI" id="CHEBI:21137"/>
    </ligand>
</feature>
<feature type="binding site" evidence="1">
    <location>
        <position position="205"/>
    </location>
    <ligand>
        <name>[3Fe-4S] cluster</name>
        <dbReference type="ChEBI" id="CHEBI:21137"/>
    </ligand>
</feature>
<feature type="binding site" evidence="1">
    <location>
        <position position="211"/>
    </location>
    <ligand>
        <name>[3Fe-4S] cluster</name>
        <dbReference type="ChEBI" id="CHEBI:21137"/>
    </ligand>
</feature>
<feature type="binding site" evidence="1">
    <location>
        <position position="215"/>
    </location>
    <ligand>
        <name>[4Fe-4S] cluster</name>
        <dbReference type="ChEBI" id="CHEBI:49883"/>
    </ligand>
</feature>
<feature type="binding site" evidence="1">
    <location>
        <begin position="226"/>
        <end position="229"/>
    </location>
    <ligand>
        <name>a menaquinone</name>
        <dbReference type="ChEBI" id="CHEBI:16374"/>
    </ligand>
</feature>
<proteinExistence type="inferred from homology"/>
<keyword id="KW-0001">2Fe-2S</keyword>
<keyword id="KW-0003">3Fe-4S</keyword>
<keyword id="KW-0004">4Fe-4S</keyword>
<keyword id="KW-1003">Cell membrane</keyword>
<keyword id="KW-0249">Electron transport</keyword>
<keyword id="KW-0408">Iron</keyword>
<keyword id="KW-0411">Iron-sulfur</keyword>
<keyword id="KW-0472">Membrane</keyword>
<keyword id="KW-0479">Metal-binding</keyword>
<keyword id="KW-0560">Oxidoreductase</keyword>
<keyword id="KW-1185">Reference proteome</keyword>
<keyword id="KW-0813">Transport</keyword>
<keyword id="KW-0816">Tricarboxylic acid cycle</keyword>